<keyword id="KW-0067">ATP-binding</keyword>
<keyword id="KW-0436">Ligase</keyword>
<keyword id="KW-0547">Nucleotide-binding</keyword>
<keyword id="KW-1185">Reference proteome</keyword>
<sequence>MPARRGDAHIDFARSPRPTIGVEWEFALVDAQTRDLSNEATAVIAEIGENPRVHKELLRNTVEVVSGICRTVPEAMEDLRQTLGPARRIVRDRGMELFCAGAHPFAQWTTQKLTDAPRYAELIKRTQWWGRQMLIWGVHVHVGISSPNKVMPIMTSLLNYYPHLLALSASSPWWTGVDTGYASNRAMMFQQLPTAGLPFQFQTWAEFEGFVYDQKKTGIIDHVDEVRWDIRPSPHLGTLEMRICDGVSNLHELAALVALTHCLVVDLDRRLEADESLPTMPPWHHQENKWRAARYGLDAVIILDADSNERLVTEDLDDVLNRLEPVARKLQCADELAAVADIPRHGASYQRQRRVAEEHDGDLRAVVDALVAELEI</sequence>
<organism>
    <name type="scientific">Mycolicibacterium paratuberculosis (strain ATCC BAA-968 / K-10)</name>
    <name type="common">Mycobacterium paratuberculosis</name>
    <dbReference type="NCBI Taxonomy" id="262316"/>
    <lineage>
        <taxon>Bacteria</taxon>
        <taxon>Bacillati</taxon>
        <taxon>Actinomycetota</taxon>
        <taxon>Actinomycetes</taxon>
        <taxon>Mycobacteriales</taxon>
        <taxon>Mycobacteriaceae</taxon>
        <taxon>Mycobacterium</taxon>
        <taxon>Mycobacterium avium complex (MAC)</taxon>
    </lineage>
</organism>
<protein>
    <recommendedName>
        <fullName evidence="1">Putative glutamate--cysteine ligase 2</fullName>
        <ecNumber evidence="1">6.3.2.2</ecNumber>
    </recommendedName>
    <alternativeName>
        <fullName evidence="1">Gamma-glutamylcysteine synthetase 2</fullName>
        <shortName evidence="1">GCS 2</shortName>
        <shortName evidence="1">Gamma-GCS 2</shortName>
    </alternativeName>
</protein>
<comment type="function">
    <text evidence="1">ATP-dependent carboxylate-amine ligase which exhibits weak glutamate--cysteine ligase activity.</text>
</comment>
<comment type="catalytic activity">
    <reaction evidence="1">
        <text>L-cysteine + L-glutamate + ATP = gamma-L-glutamyl-L-cysteine + ADP + phosphate + H(+)</text>
        <dbReference type="Rhea" id="RHEA:13285"/>
        <dbReference type="ChEBI" id="CHEBI:15378"/>
        <dbReference type="ChEBI" id="CHEBI:29985"/>
        <dbReference type="ChEBI" id="CHEBI:30616"/>
        <dbReference type="ChEBI" id="CHEBI:35235"/>
        <dbReference type="ChEBI" id="CHEBI:43474"/>
        <dbReference type="ChEBI" id="CHEBI:58173"/>
        <dbReference type="ChEBI" id="CHEBI:456216"/>
        <dbReference type="EC" id="6.3.2.2"/>
    </reaction>
</comment>
<comment type="similarity">
    <text evidence="1">Belongs to the glutamate--cysteine ligase type 2 family. YbdK subfamily.</text>
</comment>
<comment type="sequence caution" evidence="2">
    <conflict type="erroneous initiation">
        <sequence resource="EMBL-CDS" id="AAS06472"/>
    </conflict>
</comment>
<feature type="chain" id="PRO_0000218207" description="Putative glutamate--cysteine ligase 2">
    <location>
        <begin position="1"/>
        <end position="376"/>
    </location>
</feature>
<gene>
    <name type="ordered locus">MAP_3922</name>
</gene>
<name>GCS2_MYCPA</name>
<reference key="1">
    <citation type="journal article" date="2005" name="Proc. Natl. Acad. Sci. U.S.A.">
        <title>The complete genome sequence of Mycobacterium avium subspecies paratuberculosis.</title>
        <authorList>
            <person name="Li L."/>
            <person name="Bannantine J.P."/>
            <person name="Zhang Q."/>
            <person name="Amonsin A."/>
            <person name="May B.J."/>
            <person name="Alt D."/>
            <person name="Banerji N."/>
            <person name="Kanjilal S."/>
            <person name="Kapur V."/>
        </authorList>
    </citation>
    <scope>NUCLEOTIDE SEQUENCE [LARGE SCALE GENOMIC DNA]</scope>
    <source>
        <strain>ATCC BAA-968 / K-10</strain>
    </source>
</reference>
<proteinExistence type="inferred from homology"/>
<evidence type="ECO:0000255" key="1">
    <source>
        <dbReference type="HAMAP-Rule" id="MF_01609"/>
    </source>
</evidence>
<evidence type="ECO:0000305" key="2"/>
<dbReference type="EC" id="6.3.2.2" evidence="1"/>
<dbReference type="EMBL" id="AE016958">
    <property type="protein sequence ID" value="AAS06472.1"/>
    <property type="status" value="ALT_INIT"/>
    <property type="molecule type" value="Genomic_DNA"/>
</dbReference>
<dbReference type="RefSeq" id="WP_015632730.1">
    <property type="nucleotide sequence ID" value="NZ_CP106873.1"/>
</dbReference>
<dbReference type="SMR" id="Q73T00"/>
<dbReference type="STRING" id="262316.MAP_3922"/>
<dbReference type="KEGG" id="mpa:MAP_3922"/>
<dbReference type="eggNOG" id="COG2170">
    <property type="taxonomic scope" value="Bacteria"/>
</dbReference>
<dbReference type="HOGENOM" id="CLU_044848_1_0_11"/>
<dbReference type="Proteomes" id="UP000000580">
    <property type="component" value="Chromosome"/>
</dbReference>
<dbReference type="GO" id="GO:0005524">
    <property type="term" value="F:ATP binding"/>
    <property type="evidence" value="ECO:0007669"/>
    <property type="project" value="UniProtKB-KW"/>
</dbReference>
<dbReference type="GO" id="GO:0004357">
    <property type="term" value="F:glutamate-cysteine ligase activity"/>
    <property type="evidence" value="ECO:0007669"/>
    <property type="project" value="UniProtKB-EC"/>
</dbReference>
<dbReference type="GO" id="GO:0042398">
    <property type="term" value="P:modified amino acid biosynthetic process"/>
    <property type="evidence" value="ECO:0007669"/>
    <property type="project" value="InterPro"/>
</dbReference>
<dbReference type="Gene3D" id="3.30.590.20">
    <property type="match status" value="1"/>
</dbReference>
<dbReference type="HAMAP" id="MF_01609">
    <property type="entry name" value="Glu_cys_ligase_2"/>
    <property type="match status" value="1"/>
</dbReference>
<dbReference type="InterPro" id="IPR050141">
    <property type="entry name" value="GCL_type2/YbdK_subfam"/>
</dbReference>
<dbReference type="InterPro" id="IPR006336">
    <property type="entry name" value="GCS2"/>
</dbReference>
<dbReference type="InterPro" id="IPR014746">
    <property type="entry name" value="Gln_synth/guanido_kin_cat_dom"/>
</dbReference>
<dbReference type="InterPro" id="IPR011793">
    <property type="entry name" value="YbdK"/>
</dbReference>
<dbReference type="NCBIfam" id="TIGR02050">
    <property type="entry name" value="gshA_cyan_rel"/>
    <property type="match status" value="1"/>
</dbReference>
<dbReference type="NCBIfam" id="NF010042">
    <property type="entry name" value="PRK13517.1-2"/>
    <property type="match status" value="1"/>
</dbReference>
<dbReference type="NCBIfam" id="NF010043">
    <property type="entry name" value="PRK13517.1-3"/>
    <property type="match status" value="1"/>
</dbReference>
<dbReference type="NCBIfam" id="NF010044">
    <property type="entry name" value="PRK13517.1-4"/>
    <property type="match status" value="1"/>
</dbReference>
<dbReference type="PANTHER" id="PTHR36510">
    <property type="entry name" value="GLUTAMATE--CYSTEINE LIGASE 2-RELATED"/>
    <property type="match status" value="1"/>
</dbReference>
<dbReference type="PANTHER" id="PTHR36510:SF1">
    <property type="entry name" value="GLUTAMATE--CYSTEINE LIGASE 2-RELATED"/>
    <property type="match status" value="1"/>
</dbReference>
<dbReference type="Pfam" id="PF04107">
    <property type="entry name" value="GCS2"/>
    <property type="match status" value="1"/>
</dbReference>
<dbReference type="SUPFAM" id="SSF55931">
    <property type="entry name" value="Glutamine synthetase/guanido kinase"/>
    <property type="match status" value="1"/>
</dbReference>
<accession>Q73T00</accession>